<gene>
    <name type="primary">Atp2b2</name>
</gene>
<reference key="1">
    <citation type="journal article" date="1988" name="J. Biol. Chem.">
        <title>Molecular cloning of two isoforms of the plasma membrane Ca2+-transporting ATPase from rat brain. Structural and functional domains exhibit similarity to Na+,K+- and other cation transport ATPases.</title>
        <authorList>
            <person name="Shull G.E."/>
            <person name="Greeb J."/>
        </authorList>
    </citation>
    <scope>NUCLEOTIDE SEQUENCE [MRNA] (ISOFORM 2)</scope>
    <source>
        <strain>Sprague-Dawley</strain>
        <tissue>Brain</tissue>
    </source>
</reference>
<reference key="2">
    <citation type="journal article" date="1992" name="Biochem. J.">
        <title>New Ca2+ pump isoforms generated by alternative splicing of rPMCA2 mRNA.</title>
        <authorList>
            <person name="Adamo H.P."/>
            <person name="Penniston J.T."/>
        </authorList>
    </citation>
    <scope>NUCLEOTIDE SEQUENCE [GENOMIC DNA] OF 1083-1243 (ISOFORMS WB/XB/YB/ZB)</scope>
    <scope>ALTERNATIVE SPLICING</scope>
</reference>
<reference key="3">
    <citation type="journal article" date="1993" name="J. Biol. Chem.">
        <title>Alternative splicing of exons encoding the calmodulin-binding domains and C termini of plasma membrane Ca(2+)-ATPase isoforms 1, 2, 3, and 4.</title>
        <authorList>
            <person name="Keeton T.P."/>
            <person name="Burk S.E."/>
            <person name="Shull G.E."/>
        </authorList>
    </citation>
    <scope>NUCLEOTIDE SEQUENCE [GENOMIC DNA] OF 1083-1243 (ISOFORMS WB/XB/YB/ZB)</scope>
    <scope>ALTERNATIVE SPLICING</scope>
    <source>
        <strain>Sprague-Dawley</strain>
    </source>
</reference>
<reference key="4">
    <citation type="journal article" date="2012" name="Nat. Commun.">
        <title>Quantitative maps of protein phosphorylation sites across 14 different rat organs and tissues.</title>
        <authorList>
            <person name="Lundby A."/>
            <person name="Secher A."/>
            <person name="Lage K."/>
            <person name="Nordsborg N.B."/>
            <person name="Dmytriyev A."/>
            <person name="Lundby C."/>
            <person name="Olsen J.V."/>
        </authorList>
    </citation>
    <scope>PHOSPHORYLATION [LARGE SCALE ANALYSIS] AT SER-27 AND THR-1188</scope>
    <scope>PHOSPHORYLATION [LARGE SCALE ANALYSIS] AT SER-1152 (ISOFORMS WA; WB AND WC)</scope>
    <scope>PHOSPHORYLATION [LARGE SCALE ANALYSIS] AT SER-1162 AND SER-1175 (ISOFORM WB)</scope>
    <scope>PHOSPHORYLATION [LARGE SCALE ANALYSIS] AT SER-1161 (ISOFORMS WB AND YB)</scope>
    <scope>PHOSPHORYLATION [LARGE SCALE ANALYSIS] AT SER-1121 (ISOFORMS XA; XB AND XC)</scope>
    <scope>PHOSPHORYLATION [LARGE SCALE ANALYSIS] AT SER-1131 AND SER-1144 (ISOFORM XB)</scope>
    <scope>PHOSPHORYLATION [LARGE SCALE ANALYSIS] AT SER-1130 (ISOFORMS XB AND ZB)</scope>
    <scope>PHOSPHORYLATION [LARGE SCALE ANALYSIS] AT SER-1138 (ISOFORMS YA; YB AND YC)</scope>
    <scope>PHOSPHORYLATION [LARGE SCALE ANALYSIS] AT SER-1147 AND SER-1148 (ISOFORM YB)</scope>
    <scope>PHOSPHORYLATION [LARGE SCALE ANALYSIS] AT SER-1107 (ISOFORMS ZA; ZB AND ZC)</scope>
    <scope>PHOSPHORYLATION [LARGE SCALE ANALYSIS] AT SER-1116 AND SER-1117 (ISOFORM ZB)</scope>
    <scope>IDENTIFICATION BY MASS SPECTROMETRY [LARGE SCALE ANALYSIS]</scope>
</reference>
<organism>
    <name type="scientific">Rattus norvegicus</name>
    <name type="common">Rat</name>
    <dbReference type="NCBI Taxonomy" id="10116"/>
    <lineage>
        <taxon>Eukaryota</taxon>
        <taxon>Metazoa</taxon>
        <taxon>Chordata</taxon>
        <taxon>Craniata</taxon>
        <taxon>Vertebrata</taxon>
        <taxon>Euteleostomi</taxon>
        <taxon>Mammalia</taxon>
        <taxon>Eutheria</taxon>
        <taxon>Euarchontoglires</taxon>
        <taxon>Glires</taxon>
        <taxon>Rodentia</taxon>
        <taxon>Myomorpha</taxon>
        <taxon>Muroidea</taxon>
        <taxon>Muridae</taxon>
        <taxon>Murinae</taxon>
        <taxon>Rattus</taxon>
    </lineage>
</organism>
<evidence type="ECO:0000250" key="1"/>
<evidence type="ECO:0000250" key="2">
    <source>
        <dbReference type="UniProtKB" id="P20020"/>
    </source>
</evidence>
<evidence type="ECO:0000250" key="3">
    <source>
        <dbReference type="UniProtKB" id="Q01814"/>
    </source>
</evidence>
<evidence type="ECO:0000250" key="4">
    <source>
        <dbReference type="UniProtKB" id="Q9R0K7"/>
    </source>
</evidence>
<evidence type="ECO:0000255" key="5"/>
<evidence type="ECO:0000256" key="6">
    <source>
        <dbReference type="SAM" id="MobiDB-lite"/>
    </source>
</evidence>
<evidence type="ECO:0000303" key="7">
    <source>
    </source>
</evidence>
<evidence type="ECO:0000305" key="8"/>
<evidence type="ECO:0007744" key="9">
    <source>
    </source>
</evidence>
<comment type="function">
    <text evidence="3 4">ATP-driven Ca(2+) ion pump involved in the maintenance of basal intracellular Ca(2+) levels in specialized cells of cerebellar circuit and vestibular and cochlear systems. Uses ATP as an energy source to transport cytosolic Ca(2+) ions across the plasma membrane to the extracellular compartment (By similarity). Has fast activation and Ca(2+) clearance rate suited to control fast neuronal Ca(2+) dynamics. At parallel fiber to Purkinje neuron synapse, mediates presynaptic Ca(2+) efflux in response to climbing fiber-induced Ca(2+) rise. Provides for fast return of Ca(2+) concentrations back to their resting levels, ultimately contributing to long-term depression induction and motor learning (By similarity). Plays an essential role in hearing and balance. In cochlear hair cells, shuttles Ca(2+) ions from stereocilia to the endolymph and dissipates Ca(2+) transients generated by the opening of the mechanoelectrical transduction channels. Regulates Ca(2+) levels in the vestibular system, where it contributes to the formation of otoconia (By similarity). In non-excitable cells, regulates Ca(2+) signaling through spatial control of Ca(2+) ions extrusion and dissipation of Ca(2+) transients generated by store-operated channels (By similarity). In lactating mammary gland, allows for the high content of Ca(2+) ions in the milk (By similarity).</text>
</comment>
<comment type="catalytic activity">
    <reaction evidence="3 4">
        <text>Ca(2+)(in) + ATP + H2O = Ca(2+)(out) + ADP + phosphate + H(+)</text>
        <dbReference type="Rhea" id="RHEA:18105"/>
        <dbReference type="ChEBI" id="CHEBI:15377"/>
        <dbReference type="ChEBI" id="CHEBI:15378"/>
        <dbReference type="ChEBI" id="CHEBI:29108"/>
        <dbReference type="ChEBI" id="CHEBI:30616"/>
        <dbReference type="ChEBI" id="CHEBI:43474"/>
        <dbReference type="ChEBI" id="CHEBI:456216"/>
        <dbReference type="EC" id="7.2.2.10"/>
    </reaction>
    <physiologicalReaction direction="left-to-right" evidence="3 4">
        <dbReference type="Rhea" id="RHEA:18106"/>
    </physiologicalReaction>
</comment>
<comment type="subunit">
    <text evidence="3">Interacts with PDZD11.</text>
</comment>
<comment type="subcellular location">
    <subcellularLocation>
        <location evidence="3">Cell membrane</location>
        <topology evidence="5">Multi-pass membrane protein</topology>
    </subcellularLocation>
    <subcellularLocation>
        <location evidence="4">Synapse</location>
    </subcellularLocation>
    <subcellularLocation>
        <location evidence="3">Apical cell membrane</location>
        <topology evidence="5">Multi-pass membrane protein</topology>
    </subcellularLocation>
    <subcellularLocation>
        <location evidence="3">Basolateral cell membrane</location>
        <topology evidence="5">Multi-pass membrane protein</topology>
    </subcellularLocation>
</comment>
<comment type="alternative products">
    <event type="alternative splicing"/>
    <isoform>
        <id>P11506-13</id>
        <name>1</name>
        <sequence type="displayed"/>
    </isoform>
    <isoform>
        <id>P11506-1</id>
        <name>WB</name>
        <name>AIIICI</name>
        <sequence type="described" ref="VSP_038681 VSP_038682"/>
    </isoform>
    <isoform>
        <id>P11506-2</id>
        <name>WA</name>
        <name>AIIICII</name>
        <sequence type="described" ref="VSP_000390"/>
    </isoform>
    <isoform>
        <id>P11506-3</id>
        <name>XA</name>
        <name>AIICII</name>
        <sequence type="described" ref="VSP_000387 VSP_000390"/>
    </isoform>
    <isoform>
        <id>P11506-4</id>
        <name>YA</name>
        <name>AIIICII</name>
        <sequence type="described" ref="VSP_000389 VSP_000390"/>
    </isoform>
    <isoform>
        <id>P11506-5</id>
        <name>ZA</name>
        <name>AICII</name>
        <sequence type="described" ref="VSP_000388 VSP_000390"/>
    </isoform>
    <isoform>
        <id>P11506-6</id>
        <name>XB</name>
        <name>AIICI</name>
        <sequence type="described" ref="VSP_000387 VSP_038681 VSP_038682"/>
    </isoform>
    <isoform>
        <id>P11506-7</id>
        <name>YB</name>
        <name>AIIICI</name>
        <sequence type="described" ref="VSP_000389 VSP_038681 VSP_038682"/>
    </isoform>
    <isoform>
        <id>P11506-8</id>
        <name>ZB</name>
        <name>AICI</name>
        <sequence type="described" ref="VSP_000388 VSP_038681 VSP_038682"/>
    </isoform>
    <isoform>
        <id>P11506-9</id>
        <name>WC</name>
        <name>AIIICIII</name>
        <sequence type="described" ref="VSP_000391"/>
    </isoform>
    <isoform>
        <id>P11506-10</id>
        <name>XC</name>
        <name>AIICIII</name>
        <sequence type="described" ref="VSP_000387 VSP_000391"/>
    </isoform>
    <isoform>
        <id>P11506-11</id>
        <name>YC</name>
        <name>AIIICIII</name>
        <sequence type="described" ref="VSP_000389 VSP_000391"/>
    </isoform>
    <isoform>
        <id>P11506-12</id>
        <name>ZC</name>
        <name>AICIII</name>
        <sequence type="described" ref="VSP_000388 VSP_000391"/>
    </isoform>
    <isoform>
        <id>P11506-14</id>
        <name>2</name>
        <sequence type="described" ref="VSP_000388"/>
    </isoform>
    <text>There is a combination of two alternatively spliced domains at N-terminal site A (W, X, Y and Z) and at C-terminal site C (A, B and C). So far the splice sites have only been studied independently. Experimental confirmation may be lacking for some isoforms.</text>
</comment>
<comment type="tissue specificity">
    <text>Isoforms containing segment B are found in brain, uterus, liver and kidney and in low levels in other tissues. Isoforms containing segment W are found in kidney, uterus, and pancreas. Isoforms containing segment Y are found in pancreas and in low levels in brain and heart. Isoforms containing segment Z are found in brain and heart and isoforms containing segment X are found in low levels in brain. Isoforms containing segment A are found in low levels in heart and small intestine while isoforms containing segment C are found in testis and in low levels in other tissues.</text>
</comment>
<comment type="similarity">
    <text evidence="8">Belongs to the cation transport ATPase (P-type) (TC 3.A.3) family. Type IIB subfamily.</text>
</comment>
<keyword id="KW-0025">Alternative splicing</keyword>
<keyword id="KW-0067">ATP-binding</keyword>
<keyword id="KW-0106">Calcium</keyword>
<keyword id="KW-0109">Calcium transport</keyword>
<keyword id="KW-0112">Calmodulin-binding</keyword>
<keyword id="KW-1003">Cell membrane</keyword>
<keyword id="KW-0406">Ion transport</keyword>
<keyword id="KW-0460">Magnesium</keyword>
<keyword id="KW-0472">Membrane</keyword>
<keyword id="KW-0479">Metal-binding</keyword>
<keyword id="KW-0547">Nucleotide-binding</keyword>
<keyword id="KW-0597">Phosphoprotein</keyword>
<keyword id="KW-1185">Reference proteome</keyword>
<keyword id="KW-0770">Synapse</keyword>
<keyword id="KW-1278">Translocase</keyword>
<keyword id="KW-0812">Transmembrane</keyword>
<keyword id="KW-1133">Transmembrane helix</keyword>
<keyword id="KW-0813">Transport</keyword>
<sequence>MGDMTNSDFYSKNQRNESSHGGEFGCSMEELRSLMELRGTEAVVKIKETYGDTESICRRLKTSPVEGLPGTAPDLEKRKQIFGQNFIPPKKPKTFLQLVWEALQDVTLIILEIAAIISLGLSFYHPPGESNEGCATAQGGAEDEGEAEAGWIEGAAILLSVICVVLVTAFNDWSKEKQFRGLQSRIEQEQKFTVVRAGQVVQIPVAEIVVGDIAQIKYGDLLPADGLFIQGNDLKIDESSLTGESDQVRKSVDKDPMLLSGTHVMEGSGRMVVTAVGVNSQTGIIFTLLGAGGEEEEKKDKKGVKKGDGLQLPAADGAAPANAAGSANASLVNGKMQDGSADSSQSKAKQQDGAAAMEMQPLKSAEGGDADDKKKANMHKKEKSVLQGKLTKLAVQIGKAGLVMSAITVIILVLYFTVDTFVVNKKPWLTECTPVYVQYFVKFFIIGVTVLVVAVPEGLPLAVTISLAYSVKKMMKDNNLVRHLDACETMGNATAICSDKTGTLTTNRMTVVQAYVGDVHYKEIPDPSSINAKTLELLVNAIAINSAYTTKILPPEKEGALPRQVGNKTECGLLGFVLDLRQDYEPVRSQMPEEKLYKVYTFNSVRKSMSTVIKMPDESFRMYSKGASEIVLKKCCKILSGAGEPRVFRPRDRDEMVKKVIEPMACDGLRTICVAYRDFPSSPEPDWDNENDILNELTCICVVGIEDPVRPEVPEAIRKCQRAGITVRMVTGDNINTARAIAIKCGIIHPGEDFLCLEGKEFNRRIRNEKGEIEQERIDKIWPKLRVLARSSPTDKHTLVKGIIDSTHTEQRQVVAVTGDGTNDGPALKKADVGFAMGIAGTDVAKEASDIILTDDNFSSIVKAVMWGRNVYDSISKFLQFQLTVNVVAVIVAFTGACITQDSPLKAVQMLWVNLIMDTFASLALATEPPTETLLLRKPYGRNKPLISRTMMKNILGHAVYQLTLIFTLLFVGEKMFQIDSGRNAPLHSPPSEHYTIIFNTFVMMQLFNEINARKIHGERNVFDGIFRNPIFCTIVLGTFAIQIVIVQFGGKPFSCSPLQLDQWMWCIFIGLGELVWGQVIATIPTSRLKFLKEAGRLTQKEEIPEEELNEDVEEIDHAERELRRGQILWFRGLNRIQTQIRVVKAFRSSLYEGLEKPESRTSIHNFMAHPEFRIEDSQPHIPLIDDTDLEEDAALKQNSSPPSSLNKNNSAIDSGINLTTDTSKSATSSSPGSPIHSLETSL</sequence>
<accession>P11506</accession>
<accession>Q63443</accession>
<protein>
    <recommendedName>
        <fullName>Plasma membrane calcium-transporting ATPase 2</fullName>
        <shortName>PMCA2</shortName>
        <ecNumber evidence="3 4">7.2.2.10</ecNumber>
    </recommendedName>
    <alternativeName>
        <fullName>Plasma membrane calcium ATPase isoform 2</fullName>
    </alternativeName>
    <alternativeName>
        <fullName>Plasma membrane calcium pump isoform 2</fullName>
    </alternativeName>
</protein>
<feature type="chain" id="PRO_0000046216" description="Plasma membrane calcium-transporting ATPase 2">
    <location>
        <begin position="1"/>
        <end position="1243"/>
    </location>
</feature>
<feature type="topological domain" description="Cytoplasmic" evidence="5">
    <location>
        <begin position="1"/>
        <end position="94"/>
    </location>
</feature>
<feature type="transmembrane region" description="Helical" evidence="5">
    <location>
        <begin position="95"/>
        <end position="115"/>
    </location>
</feature>
<feature type="topological domain" description="Extracellular" evidence="5">
    <location>
        <begin position="116"/>
        <end position="152"/>
    </location>
</feature>
<feature type="transmembrane region" description="Helical" evidence="5">
    <location>
        <begin position="153"/>
        <end position="173"/>
    </location>
</feature>
<feature type="topological domain" description="Cytoplasmic" evidence="5">
    <location>
        <begin position="174"/>
        <end position="390"/>
    </location>
</feature>
<feature type="transmembrane region" description="Helical" evidence="5">
    <location>
        <begin position="391"/>
        <end position="410"/>
    </location>
</feature>
<feature type="topological domain" description="Extracellular" evidence="5">
    <location>
        <begin position="411"/>
        <end position="443"/>
    </location>
</feature>
<feature type="transmembrane region" description="Helical" evidence="5">
    <location>
        <begin position="444"/>
        <end position="461"/>
    </location>
</feature>
<feature type="topological domain" description="Cytoplasmic" evidence="5">
    <location>
        <begin position="462"/>
        <end position="875"/>
    </location>
</feature>
<feature type="transmembrane region" description="Helical" evidence="5">
    <location>
        <begin position="876"/>
        <end position="895"/>
    </location>
</feature>
<feature type="topological domain" description="Extracellular" evidence="5">
    <location>
        <begin position="896"/>
        <end position="905"/>
    </location>
</feature>
<feature type="transmembrane region" description="Helical" evidence="5">
    <location>
        <begin position="906"/>
        <end position="926"/>
    </location>
</feature>
<feature type="topological domain" description="Cytoplasmic" evidence="5">
    <location>
        <begin position="927"/>
        <end position="946"/>
    </location>
</feature>
<feature type="transmembrane region" description="Helical" evidence="5">
    <location>
        <begin position="947"/>
        <end position="969"/>
    </location>
</feature>
<feature type="topological domain" description="Extracellular" evidence="5">
    <location>
        <begin position="970"/>
        <end position="987"/>
    </location>
</feature>
<feature type="transmembrane region" description="Helical" evidence="5">
    <location>
        <begin position="988"/>
        <end position="1009"/>
    </location>
</feature>
<feature type="topological domain" description="Cytoplasmic" evidence="5">
    <location>
        <begin position="1010"/>
        <end position="1028"/>
    </location>
</feature>
<feature type="transmembrane region" description="Helical" evidence="5">
    <location>
        <begin position="1029"/>
        <end position="1050"/>
    </location>
</feature>
<feature type="topological domain" description="Extracellular" evidence="5">
    <location>
        <begin position="1051"/>
        <end position="1060"/>
    </location>
</feature>
<feature type="transmembrane region" description="Helical" evidence="5">
    <location>
        <begin position="1061"/>
        <end position="1082"/>
    </location>
</feature>
<feature type="topological domain" description="Cytoplasmic" evidence="5">
    <location>
        <begin position="1083"/>
        <end position="1243"/>
    </location>
</feature>
<feature type="region of interest" description="Disordered" evidence="6">
    <location>
        <begin position="1"/>
        <end position="24"/>
    </location>
</feature>
<feature type="region of interest" description="Disordered" evidence="6">
    <location>
        <begin position="296"/>
        <end position="382"/>
    </location>
</feature>
<feature type="region of interest" description="Calmodulin-binding subdomain A" evidence="1">
    <location>
        <begin position="1123"/>
        <end position="1140"/>
    </location>
</feature>
<feature type="region of interest" description="Calmodulin-binding subdomain B" evidence="1">
    <location>
        <begin position="1141"/>
        <end position="1150"/>
    </location>
</feature>
<feature type="region of interest" description="Disordered" evidence="6">
    <location>
        <begin position="1194"/>
        <end position="1243"/>
    </location>
</feature>
<feature type="compositionally biased region" description="Polar residues" evidence="6">
    <location>
        <begin position="1"/>
        <end position="13"/>
    </location>
</feature>
<feature type="compositionally biased region" description="Basic and acidic residues" evidence="6">
    <location>
        <begin position="296"/>
        <end position="308"/>
    </location>
</feature>
<feature type="compositionally biased region" description="Low complexity" evidence="6">
    <location>
        <begin position="313"/>
        <end position="330"/>
    </location>
</feature>
<feature type="compositionally biased region" description="Low complexity" evidence="6">
    <location>
        <begin position="337"/>
        <end position="356"/>
    </location>
</feature>
<feature type="compositionally biased region" description="Low complexity" evidence="6">
    <location>
        <begin position="1196"/>
        <end position="1211"/>
    </location>
</feature>
<feature type="compositionally biased region" description="Low complexity" evidence="6">
    <location>
        <begin position="1220"/>
        <end position="1234"/>
    </location>
</feature>
<feature type="active site" description="4-aspartylphosphate intermediate">
    <location>
        <position position="499"/>
    </location>
</feature>
<feature type="binding site" evidence="1">
    <location>
        <position position="820"/>
    </location>
    <ligand>
        <name>Mg(2+)</name>
        <dbReference type="ChEBI" id="CHEBI:18420"/>
    </ligand>
</feature>
<feature type="binding site" evidence="1">
    <location>
        <position position="824"/>
    </location>
    <ligand>
        <name>Mg(2+)</name>
        <dbReference type="ChEBI" id="CHEBI:18420"/>
    </ligand>
</feature>
<feature type="modified residue" description="Phosphoserine" evidence="4">
    <location>
        <position position="18"/>
    </location>
</feature>
<feature type="modified residue" description="Phosphoserine" evidence="9">
    <location>
        <position position="27"/>
    </location>
</feature>
<feature type="modified residue" description="Phosphothreonine; by PKC" evidence="2">
    <location>
        <position position="1139"/>
    </location>
</feature>
<feature type="modified residue" description="Phosphoserine" evidence="4">
    <location>
        <position position="1178"/>
    </location>
</feature>
<feature type="modified residue" description="Phosphothreonine" evidence="9">
    <location>
        <position position="1188"/>
    </location>
</feature>
<feature type="modified residue" description="Phosphoserine; by PKA" evidence="4">
    <location>
        <position position="1201"/>
    </location>
</feature>
<feature type="modified residue" description="Phosphoserine" evidence="3">
    <location>
        <position position="1211"/>
    </location>
</feature>
<feature type="splice variant" id="VSP_000388" description="In isoform 2, isoform ZA, isoform ZB and isoform ZC." evidence="7">
    <location>
        <begin position="303"/>
        <end position="347"/>
    </location>
</feature>
<feature type="splice variant" id="VSP_000387" description="In isoform XA, isoform XB and isoform XC." evidence="8">
    <location>
        <begin position="303"/>
        <end position="333"/>
    </location>
</feature>
<feature type="splice variant" id="VSP_000389" description="In isoform YA, isoform YB and isoform YC." evidence="8">
    <location>
        <begin position="334"/>
        <end position="347"/>
    </location>
</feature>
<feature type="splice variant" id="VSP_000390" description="In isoform WA, isoform XA, isoform YA and isoform ZA." evidence="8">
    <original>IRVVKAFRSSLYEGLEKPESRTSIHNFMAHPEFRIEDSQPHIPLIDDTDLEEDAALKQNSSPPSSLNKNNSAIDSGINLTTDTSKSATSSSPGSPIHSLETSL</original>
    <variation>IEVVNTFKSGASFQGALRRQSSVTSQSQDVANLSSPSRVSLSNALSSPTSLPPAAAGQG</variation>
    <location>
        <begin position="1141"/>
        <end position="1243"/>
    </location>
</feature>
<feature type="splice variant" id="VSP_000391" description="In isoform WC, isoform XC, isoform YC and isoform ZC." evidence="8">
    <original>IRVVKAFRSSLYEGLEKPESRTSIHNFMAHPEFRIEDSQPHIPLIDDTDLEEDAALKQNSSPPSSLNKNNSAIDSGINLTTDTSKSATSSSPGSPIHSLETSL</original>
    <variation>IEVVNTFKSGASFQGALRRQSSVTSQSQDVANLSSPSRVSLSNALSSPTSLPPAAAGHPRREGVP</variation>
    <location>
        <begin position="1141"/>
        <end position="1243"/>
    </location>
</feature>
<feature type="splice variant" id="VSP_038681" description="In isoform WB, isoform XB, isoform YB and isoform ZB." evidence="8">
    <original>I</original>
    <variation>IEVVNTFKSGASFQGALRRQSSVTSQSQDVASLSSPSRVSLSNALSSPTSLPPAAAGI</variation>
    <location>
        <position position="1141"/>
    </location>
</feature>
<feature type="splice variant" id="VSP_038682" description="In isoform WB, isoform XB, isoform YB and isoform ZB." evidence="8">
    <location>
        <begin position="1201"/>
        <end position="1243"/>
    </location>
</feature>
<feature type="modified residue" description="Phosphoserine" evidence="9">
    <location sequence="P11506-1">
        <position position="1152"/>
    </location>
</feature>
<feature type="modified residue" description="Phosphoserine" evidence="9">
    <location sequence="P11506-1">
        <position position="1161"/>
    </location>
</feature>
<feature type="modified residue" description="Phosphoserine" evidence="9">
    <location sequence="P11506-1">
        <position position="1162"/>
    </location>
</feature>
<feature type="modified residue" description="Phosphoserine" evidence="9">
    <location sequence="P11506-1">
        <position position="1175"/>
    </location>
</feature>
<feature type="modified residue" description="Phosphoserine" evidence="9">
    <location sequence="P11506-2">
        <position position="1152"/>
    </location>
</feature>
<feature type="modified residue" description="Phosphoserine" evidence="9">
    <location sequence="P11506-3">
        <position position="1121"/>
    </location>
</feature>
<feature type="modified residue" description="Phosphoserine" evidence="9">
    <location sequence="P11506-4">
        <position position="1138"/>
    </location>
</feature>
<feature type="modified residue" description="Phosphoserine" evidence="9">
    <location sequence="P11506-5">
        <position position="1107"/>
    </location>
</feature>
<feature type="modified residue" description="Phosphoserine" evidence="9">
    <location sequence="P11506-6">
        <position position="1121"/>
    </location>
</feature>
<feature type="modified residue" description="Phosphoserine" evidence="9">
    <location sequence="P11506-6">
        <position position="1130"/>
    </location>
</feature>
<feature type="modified residue" description="Phosphoserine" evidence="9">
    <location sequence="P11506-6">
        <position position="1131"/>
    </location>
</feature>
<feature type="modified residue" description="Phosphoserine" evidence="9">
    <location sequence="P11506-6">
        <position position="1144"/>
    </location>
</feature>
<feature type="modified residue" description="Phosphoserine" evidence="9">
    <location sequence="P11506-7">
        <position position="1138"/>
    </location>
</feature>
<feature type="modified residue" description="Phosphoserine" evidence="9">
    <location sequence="P11506-7">
        <position position="1147"/>
    </location>
</feature>
<feature type="modified residue" description="Phosphoserine" evidence="9">
    <location sequence="P11506-7">
        <position position="1148"/>
    </location>
</feature>
<feature type="modified residue" description="Phosphoserine" evidence="9">
    <location sequence="P11506-7">
        <position position="1161"/>
    </location>
</feature>
<feature type="modified residue" description="Phosphoserine" evidence="9">
    <location sequence="P11506-8">
        <position position="1107"/>
    </location>
</feature>
<feature type="modified residue" description="Phosphoserine" evidence="9">
    <location sequence="P11506-8">
        <position position="1116"/>
    </location>
</feature>
<feature type="modified residue" description="Phosphoserine" evidence="9">
    <location sequence="P11506-8">
        <position position="1117"/>
    </location>
</feature>
<feature type="modified residue" description="Phosphoserine" evidence="9">
    <location sequence="P11506-8">
        <position position="1130"/>
    </location>
</feature>
<feature type="modified residue" description="Phosphoserine" evidence="9">
    <location sequence="P11506-9">
        <position position="1152"/>
    </location>
</feature>
<feature type="modified residue" description="Phosphoserine" evidence="9">
    <location sequence="P11506-10">
        <position position="1121"/>
    </location>
</feature>
<feature type="modified residue" description="Phosphoserine" evidence="9">
    <location sequence="P11506-11">
        <position position="1138"/>
    </location>
</feature>
<feature type="modified residue" description="Phosphoserine" evidence="9">
    <location sequence="P11506-12">
        <position position="1107"/>
    </location>
</feature>
<name>AT2B2_RAT</name>
<dbReference type="EC" id="7.2.2.10" evidence="3 4"/>
<dbReference type="EMBL" id="J03754">
    <property type="protein sequence ID" value="AAA74219.1"/>
    <property type="molecule type" value="mRNA"/>
</dbReference>
<dbReference type="EMBL" id="AH005430">
    <property type="protein sequence ID" value="AAB60703.1"/>
    <property type="molecule type" value="Genomic_DNA"/>
</dbReference>
<dbReference type="PIR" id="B28065">
    <property type="entry name" value="B28065"/>
</dbReference>
<dbReference type="RefSeq" id="NP_036640.1">
    <molecule id="P11506-14"/>
    <property type="nucleotide sequence ID" value="NM_012508.9"/>
</dbReference>
<dbReference type="RefSeq" id="XP_063141541.1">
    <molecule id="P11506-13"/>
    <property type="nucleotide sequence ID" value="XM_063285471.1"/>
</dbReference>
<dbReference type="RefSeq" id="XP_063141542.1">
    <molecule id="P11506-13"/>
    <property type="nucleotide sequence ID" value="XM_063285472.1"/>
</dbReference>
<dbReference type="RefSeq" id="XP_063141547.1">
    <molecule id="P11506-14"/>
    <property type="nucleotide sequence ID" value="XM_063285477.1"/>
</dbReference>
<dbReference type="RefSeq" id="XP_063141548.1">
    <molecule id="P11506-14"/>
    <property type="nucleotide sequence ID" value="XM_063285478.1"/>
</dbReference>
<dbReference type="SMR" id="P11506"/>
<dbReference type="BioGRID" id="246403">
    <property type="interactions" value="2"/>
</dbReference>
<dbReference type="FunCoup" id="P11506">
    <property type="interactions" value="1766"/>
</dbReference>
<dbReference type="IntAct" id="P11506">
    <property type="interactions" value="2"/>
</dbReference>
<dbReference type="MINT" id="P11506"/>
<dbReference type="STRING" id="10116.ENSRNOP00000045983"/>
<dbReference type="iPTMnet" id="P11506"/>
<dbReference type="PhosphoSitePlus" id="P11506"/>
<dbReference type="PaxDb" id="10116-ENSRNOP00000063572"/>
<dbReference type="Ensembl" id="ENSRNOT00000095628.1">
    <molecule id="P11506-13"/>
    <property type="protein sequence ID" value="ENSRNOP00000090928.1"/>
    <property type="gene ID" value="ENSRNOG00000030269.7"/>
</dbReference>
<dbReference type="GeneID" id="24215"/>
<dbReference type="KEGG" id="rno:24215"/>
<dbReference type="UCSC" id="RGD:2176">
    <molecule id="P11506-13"/>
    <property type="organism name" value="rat"/>
</dbReference>
<dbReference type="AGR" id="RGD:2176"/>
<dbReference type="CTD" id="491"/>
<dbReference type="RGD" id="2176">
    <property type="gene designation" value="Atp2b2"/>
</dbReference>
<dbReference type="eggNOG" id="KOG0204">
    <property type="taxonomic scope" value="Eukaryota"/>
</dbReference>
<dbReference type="GeneTree" id="ENSGT00940000161461"/>
<dbReference type="InParanoid" id="P11506"/>
<dbReference type="OMA" id="ISIPWGA"/>
<dbReference type="OrthoDB" id="54877at9989"/>
<dbReference type="PhylomeDB" id="P11506"/>
<dbReference type="BRENDA" id="7.2.2.10">
    <property type="organism ID" value="5301"/>
</dbReference>
<dbReference type="Reactome" id="R-RNO-418359">
    <molecule id="P11506-2"/>
    <property type="pathway name" value="Reduction of cytosolic Ca++ levels"/>
</dbReference>
<dbReference type="Reactome" id="R-RNO-5578775">
    <molecule id="P11506-2"/>
    <property type="pathway name" value="Ion homeostasis"/>
</dbReference>
<dbReference type="Reactome" id="R-RNO-936837">
    <molecule id="P11506-2"/>
    <property type="pathway name" value="Ion transport by P-type ATPases"/>
</dbReference>
<dbReference type="PRO" id="PR:P11506"/>
<dbReference type="Proteomes" id="UP000002494">
    <property type="component" value="Chromosome 4"/>
</dbReference>
<dbReference type="Bgee" id="ENSRNOG00000030269">
    <property type="expression patterns" value="Expressed in frontal cortex and 9 other cell types or tissues"/>
</dbReference>
<dbReference type="ExpressionAtlas" id="P11506">
    <property type="expression patterns" value="baseline and differential"/>
</dbReference>
<dbReference type="GO" id="GO:0016324">
    <property type="term" value="C:apical plasma membrane"/>
    <property type="evidence" value="ECO:0000314"/>
    <property type="project" value="RGD"/>
</dbReference>
<dbReference type="GO" id="GO:0016323">
    <property type="term" value="C:basolateral plasma membrane"/>
    <property type="evidence" value="ECO:0007669"/>
    <property type="project" value="UniProtKB-SubCell"/>
</dbReference>
<dbReference type="GO" id="GO:0005929">
    <property type="term" value="C:cilium"/>
    <property type="evidence" value="ECO:0000266"/>
    <property type="project" value="RGD"/>
</dbReference>
<dbReference type="GO" id="GO:0005737">
    <property type="term" value="C:cytoplasm"/>
    <property type="evidence" value="ECO:0000250"/>
    <property type="project" value="UniProtKB"/>
</dbReference>
<dbReference type="GO" id="GO:0030425">
    <property type="term" value="C:dendrite"/>
    <property type="evidence" value="ECO:0000314"/>
    <property type="project" value="RGD"/>
</dbReference>
<dbReference type="GO" id="GO:0032591">
    <property type="term" value="C:dendritic spine membrane"/>
    <property type="evidence" value="ECO:0000314"/>
    <property type="project" value="UniProtKB"/>
</dbReference>
<dbReference type="GO" id="GO:0005783">
    <property type="term" value="C:endoplasmic reticulum"/>
    <property type="evidence" value="ECO:0000266"/>
    <property type="project" value="RGD"/>
</dbReference>
<dbReference type="GO" id="GO:0098982">
    <property type="term" value="C:GABA-ergic synapse"/>
    <property type="evidence" value="ECO:0000314"/>
    <property type="project" value="SynGO"/>
</dbReference>
<dbReference type="GO" id="GO:0098978">
    <property type="term" value="C:glutamatergic synapse"/>
    <property type="evidence" value="ECO:0000314"/>
    <property type="project" value="SynGO"/>
</dbReference>
<dbReference type="GO" id="GO:0043231">
    <property type="term" value="C:intracellular membrane-bounded organelle"/>
    <property type="evidence" value="ECO:0000318"/>
    <property type="project" value="GO_Central"/>
</dbReference>
<dbReference type="GO" id="GO:0043005">
    <property type="term" value="C:neuron projection"/>
    <property type="evidence" value="ECO:0000266"/>
    <property type="project" value="RGD"/>
</dbReference>
<dbReference type="GO" id="GO:0043025">
    <property type="term" value="C:neuronal cell body"/>
    <property type="evidence" value="ECO:0000314"/>
    <property type="project" value="RGD"/>
</dbReference>
<dbReference type="GO" id="GO:0032809">
    <property type="term" value="C:neuronal cell body membrane"/>
    <property type="evidence" value="ECO:0000314"/>
    <property type="project" value="RGD"/>
</dbReference>
<dbReference type="GO" id="GO:0098688">
    <property type="term" value="C:parallel fiber to Purkinje cell synapse"/>
    <property type="evidence" value="ECO:0000314"/>
    <property type="project" value="SynGO"/>
</dbReference>
<dbReference type="GO" id="GO:0098684">
    <property type="term" value="C:photoreceptor ribbon synapse"/>
    <property type="evidence" value="ECO:0000266"/>
    <property type="project" value="RGD"/>
</dbReference>
<dbReference type="GO" id="GO:0005886">
    <property type="term" value="C:plasma membrane"/>
    <property type="evidence" value="ECO:0000250"/>
    <property type="project" value="UniProtKB"/>
</dbReference>
<dbReference type="GO" id="GO:0098839">
    <property type="term" value="C:postsynaptic density membrane"/>
    <property type="evidence" value="ECO:0000314"/>
    <property type="project" value="SynGO"/>
</dbReference>
<dbReference type="GO" id="GO:0045211">
    <property type="term" value="C:postsynaptic membrane"/>
    <property type="evidence" value="ECO:0000314"/>
    <property type="project" value="SynGO"/>
</dbReference>
<dbReference type="GO" id="GO:0048787">
    <property type="term" value="C:presynaptic active zone membrane"/>
    <property type="evidence" value="ECO:0000314"/>
    <property type="project" value="SynGO"/>
</dbReference>
<dbReference type="GO" id="GO:0042734">
    <property type="term" value="C:presynaptic membrane"/>
    <property type="evidence" value="ECO:0000266"/>
    <property type="project" value="RGD"/>
</dbReference>
<dbReference type="GO" id="GO:0005524">
    <property type="term" value="F:ATP binding"/>
    <property type="evidence" value="ECO:0000314"/>
    <property type="project" value="RGD"/>
</dbReference>
<dbReference type="GO" id="GO:0016887">
    <property type="term" value="F:ATP hydrolysis activity"/>
    <property type="evidence" value="ECO:0007669"/>
    <property type="project" value="InterPro"/>
</dbReference>
<dbReference type="GO" id="GO:0005509">
    <property type="term" value="F:calcium ion binding"/>
    <property type="evidence" value="ECO:0000250"/>
    <property type="project" value="UniProtKB"/>
</dbReference>
<dbReference type="GO" id="GO:0030899">
    <property type="term" value="F:calcium-dependent ATPase activity"/>
    <property type="evidence" value="ECO:0000266"/>
    <property type="project" value="RGD"/>
</dbReference>
<dbReference type="GO" id="GO:0005516">
    <property type="term" value="F:calmodulin binding"/>
    <property type="evidence" value="ECO:0000250"/>
    <property type="project" value="UniProtKB"/>
</dbReference>
<dbReference type="GO" id="GO:0035254">
    <property type="term" value="F:glutamate receptor binding"/>
    <property type="evidence" value="ECO:0000353"/>
    <property type="project" value="RGD"/>
</dbReference>
<dbReference type="GO" id="GO:0046872">
    <property type="term" value="F:metal ion binding"/>
    <property type="evidence" value="ECO:0007669"/>
    <property type="project" value="UniProtKB-KW"/>
</dbReference>
<dbReference type="GO" id="GO:0005388">
    <property type="term" value="F:P-type calcium transporter activity"/>
    <property type="evidence" value="ECO:0000314"/>
    <property type="project" value="RGD"/>
</dbReference>
<dbReference type="GO" id="GO:1905059">
    <property type="term" value="F:P-type calcium transporter activity involved in regulation of postsynaptic cytosolic calcium ion concentration"/>
    <property type="evidence" value="ECO:0000266"/>
    <property type="project" value="RGD"/>
</dbReference>
<dbReference type="GO" id="GO:0030165">
    <property type="term" value="F:PDZ domain binding"/>
    <property type="evidence" value="ECO:0000353"/>
    <property type="project" value="RGD"/>
</dbReference>
<dbReference type="GO" id="GO:0060088">
    <property type="term" value="P:auditory receptor cell stereocilium organization"/>
    <property type="evidence" value="ECO:0000266"/>
    <property type="project" value="RGD"/>
</dbReference>
<dbReference type="GO" id="GO:0006816">
    <property type="term" value="P:calcium ion transport"/>
    <property type="evidence" value="ECO:0000266"/>
    <property type="project" value="RGD"/>
</dbReference>
<dbReference type="GO" id="GO:0000902">
    <property type="term" value="P:cell morphogenesis"/>
    <property type="evidence" value="ECO:0000266"/>
    <property type="project" value="RGD"/>
</dbReference>
<dbReference type="GO" id="GO:0021707">
    <property type="term" value="P:cerebellar granule cell differentiation"/>
    <property type="evidence" value="ECO:0000266"/>
    <property type="project" value="RGD"/>
</dbReference>
<dbReference type="GO" id="GO:0021702">
    <property type="term" value="P:cerebellar Purkinje cell differentiation"/>
    <property type="evidence" value="ECO:0000266"/>
    <property type="project" value="RGD"/>
</dbReference>
<dbReference type="GO" id="GO:0021692">
    <property type="term" value="P:cerebellar Purkinje cell layer morphogenesis"/>
    <property type="evidence" value="ECO:0000266"/>
    <property type="project" value="RGD"/>
</dbReference>
<dbReference type="GO" id="GO:0021549">
    <property type="term" value="P:cerebellum development"/>
    <property type="evidence" value="ECO:0000266"/>
    <property type="project" value="RGD"/>
</dbReference>
<dbReference type="GO" id="GO:0046068">
    <property type="term" value="P:cGMP metabolic process"/>
    <property type="evidence" value="ECO:0000266"/>
    <property type="project" value="RGD"/>
</dbReference>
<dbReference type="GO" id="GO:0090102">
    <property type="term" value="P:cochlea development"/>
    <property type="evidence" value="ECO:0000266"/>
    <property type="project" value="RGD"/>
</dbReference>
<dbReference type="GO" id="GO:0050910">
    <property type="term" value="P:detection of mechanical stimulus involved in sensory perception of sound"/>
    <property type="evidence" value="ECO:0000266"/>
    <property type="project" value="RGD"/>
</dbReference>
<dbReference type="GO" id="GO:0051649">
    <property type="term" value="P:establishment of localization in cell"/>
    <property type="evidence" value="ECO:0000266"/>
    <property type="project" value="RGD"/>
</dbReference>
<dbReference type="GO" id="GO:0048839">
    <property type="term" value="P:inner ear development"/>
    <property type="evidence" value="ECO:0000266"/>
    <property type="project" value="RGD"/>
</dbReference>
<dbReference type="GO" id="GO:0042472">
    <property type="term" value="P:inner ear morphogenesis"/>
    <property type="evidence" value="ECO:0000266"/>
    <property type="project" value="RGD"/>
</dbReference>
<dbReference type="GO" id="GO:0060113">
    <property type="term" value="P:inner ear receptor cell differentiation"/>
    <property type="evidence" value="ECO:0000266"/>
    <property type="project" value="RGD"/>
</dbReference>
<dbReference type="GO" id="GO:0006874">
    <property type="term" value="P:intracellular calcium ion homeostasis"/>
    <property type="evidence" value="ECO:0000266"/>
    <property type="project" value="RGD"/>
</dbReference>
<dbReference type="GO" id="GO:0007595">
    <property type="term" value="P:lactation"/>
    <property type="evidence" value="ECO:0000266"/>
    <property type="project" value="RGD"/>
</dbReference>
<dbReference type="GO" id="GO:0040011">
    <property type="term" value="P:locomotion"/>
    <property type="evidence" value="ECO:0000266"/>
    <property type="project" value="RGD"/>
</dbReference>
<dbReference type="GO" id="GO:0007626">
    <property type="term" value="P:locomotory behavior"/>
    <property type="evidence" value="ECO:0000266"/>
    <property type="project" value="RGD"/>
</dbReference>
<dbReference type="GO" id="GO:0003407">
    <property type="term" value="P:neural retina development"/>
    <property type="evidence" value="ECO:0000270"/>
    <property type="project" value="RGD"/>
</dbReference>
<dbReference type="GO" id="GO:0050885">
    <property type="term" value="P:neuromuscular process controlling balance"/>
    <property type="evidence" value="ECO:0000266"/>
    <property type="project" value="RGD"/>
</dbReference>
<dbReference type="GO" id="GO:0070050">
    <property type="term" value="P:neuron cellular homeostasis"/>
    <property type="evidence" value="ECO:0000266"/>
    <property type="project" value="RGD"/>
</dbReference>
<dbReference type="GO" id="GO:0030182">
    <property type="term" value="P:neuron differentiation"/>
    <property type="evidence" value="ECO:0000250"/>
    <property type="project" value="UniProtKB"/>
</dbReference>
<dbReference type="GO" id="GO:0045299">
    <property type="term" value="P:otolith mineralization"/>
    <property type="evidence" value="ECO:0000266"/>
    <property type="project" value="RGD"/>
</dbReference>
<dbReference type="GO" id="GO:0051928">
    <property type="term" value="P:positive regulation of calcium ion transport"/>
    <property type="evidence" value="ECO:0000266"/>
    <property type="project" value="RGD"/>
</dbReference>
<dbReference type="GO" id="GO:0008361">
    <property type="term" value="P:regulation of cell size"/>
    <property type="evidence" value="ECO:0000266"/>
    <property type="project" value="RGD"/>
</dbReference>
<dbReference type="GO" id="GO:0051480">
    <property type="term" value="P:regulation of cytosolic calcium ion concentration"/>
    <property type="evidence" value="ECO:0000266"/>
    <property type="project" value="RGD"/>
</dbReference>
<dbReference type="GO" id="GO:0048167">
    <property type="term" value="P:regulation of synaptic plasticity"/>
    <property type="evidence" value="ECO:0000266"/>
    <property type="project" value="RGD"/>
</dbReference>
<dbReference type="GO" id="GO:0007605">
    <property type="term" value="P:sensory perception of sound"/>
    <property type="evidence" value="ECO:0000250"/>
    <property type="project" value="UniProtKB"/>
</dbReference>
<dbReference type="GO" id="GO:0042428">
    <property type="term" value="P:serotonin metabolic process"/>
    <property type="evidence" value="ECO:0000266"/>
    <property type="project" value="RGD"/>
</dbReference>
<dbReference type="GO" id="GO:0050808">
    <property type="term" value="P:synapse organization"/>
    <property type="evidence" value="ECO:0000266"/>
    <property type="project" value="RGD"/>
</dbReference>
<dbReference type="CDD" id="cd02081">
    <property type="entry name" value="P-type_ATPase_Ca_PMCA-like"/>
    <property type="match status" value="1"/>
</dbReference>
<dbReference type="FunFam" id="1.20.1110.10:FF:000001">
    <property type="entry name" value="Calcium-transporting ATPase"/>
    <property type="match status" value="1"/>
</dbReference>
<dbReference type="FunFam" id="1.20.1110.10:FF:000002">
    <property type="entry name" value="Calcium-transporting ATPase"/>
    <property type="match status" value="1"/>
</dbReference>
<dbReference type="FunFam" id="1.20.1110.10:FF:000008">
    <property type="entry name" value="Calcium-transporting ATPase"/>
    <property type="match status" value="1"/>
</dbReference>
<dbReference type="FunFam" id="2.70.150.10:FF:000001">
    <property type="entry name" value="Calcium-transporting ATPase"/>
    <property type="match status" value="1"/>
</dbReference>
<dbReference type="FunFam" id="3.40.1110.10:FF:000032">
    <property type="entry name" value="Calcium-transporting ATPase"/>
    <property type="match status" value="1"/>
</dbReference>
<dbReference type="FunFam" id="3.40.50.1000:FF:000007">
    <property type="entry name" value="Calcium-transporting ATPase"/>
    <property type="match status" value="1"/>
</dbReference>
<dbReference type="Gene3D" id="3.40.1110.10">
    <property type="entry name" value="Calcium-transporting ATPase, cytoplasmic domain N"/>
    <property type="match status" value="1"/>
</dbReference>
<dbReference type="Gene3D" id="2.70.150.10">
    <property type="entry name" value="Calcium-transporting ATPase, cytoplasmic transduction domain A"/>
    <property type="match status" value="1"/>
</dbReference>
<dbReference type="Gene3D" id="1.20.1110.10">
    <property type="entry name" value="Calcium-transporting ATPase, transmembrane domain"/>
    <property type="match status" value="3"/>
</dbReference>
<dbReference type="Gene3D" id="3.40.50.1000">
    <property type="entry name" value="HAD superfamily/HAD-like"/>
    <property type="match status" value="1"/>
</dbReference>
<dbReference type="InterPro" id="IPR022141">
    <property type="entry name" value="ATP_Ca_trans_C"/>
</dbReference>
<dbReference type="InterPro" id="IPR006068">
    <property type="entry name" value="ATPase_P-typ_cation-transptr_C"/>
</dbReference>
<dbReference type="InterPro" id="IPR004014">
    <property type="entry name" value="ATPase_P-typ_cation-transptr_N"/>
</dbReference>
<dbReference type="InterPro" id="IPR023299">
    <property type="entry name" value="ATPase_P-typ_cyto_dom_N"/>
</dbReference>
<dbReference type="InterPro" id="IPR018303">
    <property type="entry name" value="ATPase_P-typ_P_site"/>
</dbReference>
<dbReference type="InterPro" id="IPR023298">
    <property type="entry name" value="ATPase_P-typ_TM_dom_sf"/>
</dbReference>
<dbReference type="InterPro" id="IPR008250">
    <property type="entry name" value="ATPase_P-typ_transduc_dom_A_sf"/>
</dbReference>
<dbReference type="InterPro" id="IPR036412">
    <property type="entry name" value="HAD-like_sf"/>
</dbReference>
<dbReference type="InterPro" id="IPR023214">
    <property type="entry name" value="HAD_sf"/>
</dbReference>
<dbReference type="InterPro" id="IPR006408">
    <property type="entry name" value="P-type_ATPase_IIB"/>
</dbReference>
<dbReference type="InterPro" id="IPR001757">
    <property type="entry name" value="P_typ_ATPase"/>
</dbReference>
<dbReference type="InterPro" id="IPR044492">
    <property type="entry name" value="P_typ_ATPase_HD_dom"/>
</dbReference>
<dbReference type="NCBIfam" id="TIGR01517">
    <property type="entry name" value="ATPase-IIB_Ca"/>
    <property type="match status" value="1"/>
</dbReference>
<dbReference type="NCBIfam" id="TIGR01494">
    <property type="entry name" value="ATPase_P-type"/>
    <property type="match status" value="3"/>
</dbReference>
<dbReference type="PANTHER" id="PTHR24093">
    <property type="entry name" value="CATION TRANSPORTING ATPASE"/>
    <property type="match status" value="1"/>
</dbReference>
<dbReference type="PANTHER" id="PTHR24093:SF377">
    <property type="entry name" value="PLASMA MEMBRANE CALCIUM-TRANSPORTING ATPASE 2"/>
    <property type="match status" value="1"/>
</dbReference>
<dbReference type="Pfam" id="PF12424">
    <property type="entry name" value="ATP_Ca_trans_C"/>
    <property type="match status" value="1"/>
</dbReference>
<dbReference type="Pfam" id="PF13246">
    <property type="entry name" value="Cation_ATPase"/>
    <property type="match status" value="1"/>
</dbReference>
<dbReference type="Pfam" id="PF00689">
    <property type="entry name" value="Cation_ATPase_C"/>
    <property type="match status" value="1"/>
</dbReference>
<dbReference type="Pfam" id="PF00690">
    <property type="entry name" value="Cation_ATPase_N"/>
    <property type="match status" value="1"/>
</dbReference>
<dbReference type="Pfam" id="PF00122">
    <property type="entry name" value="E1-E2_ATPase"/>
    <property type="match status" value="2"/>
</dbReference>
<dbReference type="Pfam" id="PF00702">
    <property type="entry name" value="Hydrolase"/>
    <property type="match status" value="1"/>
</dbReference>
<dbReference type="PRINTS" id="PR00119">
    <property type="entry name" value="CATATPASE"/>
</dbReference>
<dbReference type="PRINTS" id="PR00121">
    <property type="entry name" value="NAKATPASE"/>
</dbReference>
<dbReference type="SFLD" id="SFLDG00002">
    <property type="entry name" value="C1.7:_P-type_atpase_like"/>
    <property type="match status" value="1"/>
</dbReference>
<dbReference type="SFLD" id="SFLDF00027">
    <property type="entry name" value="p-type_atpase"/>
    <property type="match status" value="1"/>
</dbReference>
<dbReference type="SMART" id="SM00831">
    <property type="entry name" value="Cation_ATPase_N"/>
    <property type="match status" value="1"/>
</dbReference>
<dbReference type="SUPFAM" id="SSF81653">
    <property type="entry name" value="Calcium ATPase, transduction domain A"/>
    <property type="match status" value="1"/>
</dbReference>
<dbReference type="SUPFAM" id="SSF81665">
    <property type="entry name" value="Calcium ATPase, transmembrane domain M"/>
    <property type="match status" value="1"/>
</dbReference>
<dbReference type="SUPFAM" id="SSF56784">
    <property type="entry name" value="HAD-like"/>
    <property type="match status" value="1"/>
</dbReference>
<dbReference type="SUPFAM" id="SSF81660">
    <property type="entry name" value="Metal cation-transporting ATPase, ATP-binding domain N"/>
    <property type="match status" value="1"/>
</dbReference>
<dbReference type="PROSITE" id="PS00154">
    <property type="entry name" value="ATPASE_E1_E2"/>
    <property type="match status" value="1"/>
</dbReference>
<proteinExistence type="evidence at protein level"/>